<gene>
    <name type="primary">sts1</name>
    <name type="ORF">ATEG_05494</name>
</gene>
<sequence>MNSLVATPPVPPHFYEYSRLASARQMSTPTVTPNSRKRKAEDDTADHDGRMSASPTSSPAFTPRTLPSARNVKRTRPNISGRPLSLPRLLETLDTDALRGMLRSMCERHPSLADEIVHTAPRPSVSSALQVLRQYQSNLQSSFPLGGNPASDYAYNRVRQPLGQLLDALSDFTPHFLPPNETQPSVSLSYLDDATEIIHALPRWSTPQNNIERDSAYDEICKAWILVIREAAKRGGGFQLQYGGWEQKLAKHNQNSGGKLQAAVHELASCLGWMHGPDTQAYGGSGGNNDLGSIREQLLSGTYGLGTPVKVGPW</sequence>
<keyword id="KW-0963">Cytoplasm</keyword>
<keyword id="KW-0539">Nucleus</keyword>
<keyword id="KW-0653">Protein transport</keyword>
<keyword id="KW-1185">Reference proteome</keyword>
<keyword id="KW-0813">Transport</keyword>
<name>STS1_ASPTN</name>
<protein>
    <recommendedName>
        <fullName>Tethering factor for nuclear proteasome sts1</fullName>
    </recommendedName>
</protein>
<accession>Q0CLE0</accession>
<comment type="function">
    <text evidence="1">Involved in ubiquitin-mediated protein degradation. Regulatory factor in the ubiquitin/proteasome pathway that controls the turnover of proteasome substrates. Targets proteasomes to the nucleus and facilitates the degradation of nuclear proteins (By similarity).</text>
</comment>
<comment type="subunit">
    <text evidence="1">Binds the proteasome.</text>
</comment>
<comment type="subcellular location">
    <subcellularLocation>
        <location evidence="1">Cytoplasm</location>
    </subcellularLocation>
    <subcellularLocation>
        <location evidence="1">Nucleus</location>
    </subcellularLocation>
</comment>
<comment type="similarity">
    <text evidence="3">Belongs to the cut8/STS1 family.</text>
</comment>
<proteinExistence type="inferred from homology"/>
<feature type="chain" id="PRO_0000409400" description="Tethering factor for nuclear proteasome sts1">
    <location>
        <begin position="1"/>
        <end position="314"/>
    </location>
</feature>
<feature type="region of interest" description="Disordered" evidence="2">
    <location>
        <begin position="24"/>
        <end position="83"/>
    </location>
</feature>
<feature type="compositionally biased region" description="Polar residues" evidence="2">
    <location>
        <begin position="24"/>
        <end position="34"/>
    </location>
</feature>
<feature type="compositionally biased region" description="Basic and acidic residues" evidence="2">
    <location>
        <begin position="39"/>
        <end position="50"/>
    </location>
</feature>
<feature type="compositionally biased region" description="Low complexity" evidence="2">
    <location>
        <begin position="52"/>
        <end position="63"/>
    </location>
</feature>
<evidence type="ECO:0000250" key="1"/>
<evidence type="ECO:0000256" key="2">
    <source>
        <dbReference type="SAM" id="MobiDB-lite"/>
    </source>
</evidence>
<evidence type="ECO:0000305" key="3"/>
<reference key="1">
    <citation type="submission" date="2005-09" db="EMBL/GenBank/DDBJ databases">
        <title>Annotation of the Aspergillus terreus NIH2624 genome.</title>
        <authorList>
            <person name="Birren B.W."/>
            <person name="Lander E.S."/>
            <person name="Galagan J.E."/>
            <person name="Nusbaum C."/>
            <person name="Devon K."/>
            <person name="Henn M."/>
            <person name="Ma L.-J."/>
            <person name="Jaffe D.B."/>
            <person name="Butler J."/>
            <person name="Alvarez P."/>
            <person name="Gnerre S."/>
            <person name="Grabherr M."/>
            <person name="Kleber M."/>
            <person name="Mauceli E.W."/>
            <person name="Brockman W."/>
            <person name="Rounsley S."/>
            <person name="Young S.K."/>
            <person name="LaButti K."/>
            <person name="Pushparaj V."/>
            <person name="DeCaprio D."/>
            <person name="Crawford M."/>
            <person name="Koehrsen M."/>
            <person name="Engels R."/>
            <person name="Montgomery P."/>
            <person name="Pearson M."/>
            <person name="Howarth C."/>
            <person name="Larson L."/>
            <person name="Luoma S."/>
            <person name="White J."/>
            <person name="Alvarado L."/>
            <person name="Kodira C.D."/>
            <person name="Zeng Q."/>
            <person name="Oleary S."/>
            <person name="Yandava C."/>
            <person name="Denning D.W."/>
            <person name="Nierman W.C."/>
            <person name="Milne T."/>
            <person name="Madden K."/>
        </authorList>
    </citation>
    <scope>NUCLEOTIDE SEQUENCE [LARGE SCALE GENOMIC DNA]</scope>
    <source>
        <strain>NIH 2624 / FGSC A1156</strain>
    </source>
</reference>
<organism>
    <name type="scientific">Aspergillus terreus (strain NIH 2624 / FGSC A1156)</name>
    <dbReference type="NCBI Taxonomy" id="341663"/>
    <lineage>
        <taxon>Eukaryota</taxon>
        <taxon>Fungi</taxon>
        <taxon>Dikarya</taxon>
        <taxon>Ascomycota</taxon>
        <taxon>Pezizomycotina</taxon>
        <taxon>Eurotiomycetes</taxon>
        <taxon>Eurotiomycetidae</taxon>
        <taxon>Eurotiales</taxon>
        <taxon>Aspergillaceae</taxon>
        <taxon>Aspergillus</taxon>
        <taxon>Aspergillus subgen. Circumdati</taxon>
    </lineage>
</organism>
<dbReference type="EMBL" id="CH476600">
    <property type="protein sequence ID" value="EAU34563.1"/>
    <property type="molecule type" value="Genomic_DNA"/>
</dbReference>
<dbReference type="RefSeq" id="XP_001214672.1">
    <property type="nucleotide sequence ID" value="XM_001214672.1"/>
</dbReference>
<dbReference type="SMR" id="Q0CLE0"/>
<dbReference type="STRING" id="341663.Q0CLE0"/>
<dbReference type="EnsemblFungi" id="EAU34563">
    <property type="protein sequence ID" value="EAU34563"/>
    <property type="gene ID" value="ATEG_05494"/>
</dbReference>
<dbReference type="GeneID" id="4320973"/>
<dbReference type="VEuPathDB" id="FungiDB:ATEG_05494"/>
<dbReference type="eggNOG" id="ENOG502RNK4">
    <property type="taxonomic scope" value="Eukaryota"/>
</dbReference>
<dbReference type="HOGENOM" id="CLU_033658_0_0_1"/>
<dbReference type="OMA" id="DYTPHFL"/>
<dbReference type="OrthoDB" id="10061064at2759"/>
<dbReference type="Proteomes" id="UP000007963">
    <property type="component" value="Unassembled WGS sequence"/>
</dbReference>
<dbReference type="GO" id="GO:0005737">
    <property type="term" value="C:cytoplasm"/>
    <property type="evidence" value="ECO:0007669"/>
    <property type="project" value="UniProtKB-SubCell"/>
</dbReference>
<dbReference type="GO" id="GO:0031965">
    <property type="term" value="C:nuclear membrane"/>
    <property type="evidence" value="ECO:0007669"/>
    <property type="project" value="TreeGrafter"/>
</dbReference>
<dbReference type="GO" id="GO:0070628">
    <property type="term" value="F:proteasome binding"/>
    <property type="evidence" value="ECO:0007669"/>
    <property type="project" value="TreeGrafter"/>
</dbReference>
<dbReference type="GO" id="GO:0071630">
    <property type="term" value="P:nuclear protein quality control by the ubiquitin-proteasome system"/>
    <property type="evidence" value="ECO:0007669"/>
    <property type="project" value="InterPro"/>
</dbReference>
<dbReference type="GO" id="GO:0031144">
    <property type="term" value="P:proteasome localization"/>
    <property type="evidence" value="ECO:0007669"/>
    <property type="project" value="InterPro"/>
</dbReference>
<dbReference type="GO" id="GO:0015031">
    <property type="term" value="P:protein transport"/>
    <property type="evidence" value="ECO:0007669"/>
    <property type="project" value="UniProtKB-KW"/>
</dbReference>
<dbReference type="FunFam" id="1.20.58.1590:FF:000001">
    <property type="entry name" value="Tethering factor for nuclear proteasome STS1"/>
    <property type="match status" value="1"/>
</dbReference>
<dbReference type="Gene3D" id="1.20.58.1590">
    <property type="entry name" value="Tethering factor for nuclear proteasome Cut8/Sts1"/>
    <property type="match status" value="1"/>
</dbReference>
<dbReference type="InterPro" id="IPR013868">
    <property type="entry name" value="Cut8/Sts1_fam"/>
</dbReference>
<dbReference type="InterPro" id="IPR038422">
    <property type="entry name" value="Cut8/Sts1_sf"/>
</dbReference>
<dbReference type="PANTHER" id="PTHR28032">
    <property type="entry name" value="FI02826P"/>
    <property type="match status" value="1"/>
</dbReference>
<dbReference type="PANTHER" id="PTHR28032:SF1">
    <property type="entry name" value="FI02826P"/>
    <property type="match status" value="1"/>
</dbReference>
<dbReference type="Pfam" id="PF08559">
    <property type="entry name" value="Cut8"/>
    <property type="match status" value="1"/>
</dbReference>